<sequence length="284" mass="31571">MLIIETLPLLRQHIRRLRQEGKRIALVPTMGNLHDGHMKLVDEARARADVVVVSIFVNPMQFDRADDLARYPRTLQEDCEKLKKRHVDFVFSPVPSDIYPQGTEGATYVDVPGISTMLEGASRPGHFRGVSTIVSKLFNLVQPDIACFGEKDFQQLALIRKMVADMGYDIEIVGVPIVRAKDGLALSSRNGYLTADQRKIAPGLCKVMNAMAEQLKAKELTTEEIVALAEQELNDKGLRADDIQIRDADTLLELSATSKRAVILVAAWLGQARLIDNKVVELAE</sequence>
<accession>A4W6N7</accession>
<reference key="1">
    <citation type="journal article" date="2010" name="PLoS Genet.">
        <title>Genome sequence of the plant growth promoting endophytic bacterium Enterobacter sp. 638.</title>
        <authorList>
            <person name="Taghavi S."/>
            <person name="van der Lelie D."/>
            <person name="Hoffman A."/>
            <person name="Zhang Y.B."/>
            <person name="Walla M.D."/>
            <person name="Vangronsveld J."/>
            <person name="Newman L."/>
            <person name="Monchy S."/>
        </authorList>
    </citation>
    <scope>NUCLEOTIDE SEQUENCE [LARGE SCALE GENOMIC DNA]</scope>
    <source>
        <strain>638</strain>
    </source>
</reference>
<name>PANC_ENT38</name>
<evidence type="ECO:0000255" key="1">
    <source>
        <dbReference type="HAMAP-Rule" id="MF_00158"/>
    </source>
</evidence>
<protein>
    <recommendedName>
        <fullName evidence="1">Pantothenate synthetase</fullName>
        <shortName evidence="1">PS</shortName>
        <ecNumber evidence="1">6.3.2.1</ecNumber>
    </recommendedName>
    <alternativeName>
        <fullName evidence="1">Pantoate--beta-alanine ligase</fullName>
    </alternativeName>
    <alternativeName>
        <fullName evidence="1">Pantoate-activating enzyme</fullName>
    </alternativeName>
</protein>
<keyword id="KW-0067">ATP-binding</keyword>
<keyword id="KW-0963">Cytoplasm</keyword>
<keyword id="KW-0436">Ligase</keyword>
<keyword id="KW-0547">Nucleotide-binding</keyword>
<keyword id="KW-0566">Pantothenate biosynthesis</keyword>
<feature type="chain" id="PRO_1000097065" description="Pantothenate synthetase">
    <location>
        <begin position="1"/>
        <end position="284"/>
    </location>
</feature>
<feature type="active site" description="Proton donor" evidence="1">
    <location>
        <position position="37"/>
    </location>
</feature>
<feature type="binding site" evidence="1">
    <location>
        <begin position="30"/>
        <end position="37"/>
    </location>
    <ligand>
        <name>ATP</name>
        <dbReference type="ChEBI" id="CHEBI:30616"/>
    </ligand>
</feature>
<feature type="binding site" evidence="1">
    <location>
        <position position="61"/>
    </location>
    <ligand>
        <name>(R)-pantoate</name>
        <dbReference type="ChEBI" id="CHEBI:15980"/>
    </ligand>
</feature>
<feature type="binding site" evidence="1">
    <location>
        <position position="61"/>
    </location>
    <ligand>
        <name>beta-alanine</name>
        <dbReference type="ChEBI" id="CHEBI:57966"/>
    </ligand>
</feature>
<feature type="binding site" evidence="1">
    <location>
        <begin position="149"/>
        <end position="152"/>
    </location>
    <ligand>
        <name>ATP</name>
        <dbReference type="ChEBI" id="CHEBI:30616"/>
    </ligand>
</feature>
<feature type="binding site" evidence="1">
    <location>
        <position position="155"/>
    </location>
    <ligand>
        <name>(R)-pantoate</name>
        <dbReference type="ChEBI" id="CHEBI:15980"/>
    </ligand>
</feature>
<feature type="binding site" evidence="1">
    <location>
        <position position="178"/>
    </location>
    <ligand>
        <name>ATP</name>
        <dbReference type="ChEBI" id="CHEBI:30616"/>
    </ligand>
</feature>
<feature type="binding site" evidence="1">
    <location>
        <begin position="186"/>
        <end position="189"/>
    </location>
    <ligand>
        <name>ATP</name>
        <dbReference type="ChEBI" id="CHEBI:30616"/>
    </ligand>
</feature>
<comment type="function">
    <text evidence="1">Catalyzes the condensation of pantoate with beta-alanine in an ATP-dependent reaction via a pantoyl-adenylate intermediate.</text>
</comment>
<comment type="catalytic activity">
    <reaction evidence="1">
        <text>(R)-pantoate + beta-alanine + ATP = (R)-pantothenate + AMP + diphosphate + H(+)</text>
        <dbReference type="Rhea" id="RHEA:10912"/>
        <dbReference type="ChEBI" id="CHEBI:15378"/>
        <dbReference type="ChEBI" id="CHEBI:15980"/>
        <dbReference type="ChEBI" id="CHEBI:29032"/>
        <dbReference type="ChEBI" id="CHEBI:30616"/>
        <dbReference type="ChEBI" id="CHEBI:33019"/>
        <dbReference type="ChEBI" id="CHEBI:57966"/>
        <dbReference type="ChEBI" id="CHEBI:456215"/>
        <dbReference type="EC" id="6.3.2.1"/>
    </reaction>
</comment>
<comment type="pathway">
    <text evidence="1">Cofactor biosynthesis; (R)-pantothenate biosynthesis; (R)-pantothenate from (R)-pantoate and beta-alanine: step 1/1.</text>
</comment>
<comment type="subunit">
    <text evidence="1">Homodimer.</text>
</comment>
<comment type="subcellular location">
    <subcellularLocation>
        <location evidence="1">Cytoplasm</location>
    </subcellularLocation>
</comment>
<comment type="miscellaneous">
    <text evidence="1">The reaction proceeds by a bi uni uni bi ping pong mechanism.</text>
</comment>
<comment type="similarity">
    <text evidence="1">Belongs to the pantothenate synthetase family.</text>
</comment>
<dbReference type="EC" id="6.3.2.1" evidence="1"/>
<dbReference type="EMBL" id="CP000653">
    <property type="protein sequence ID" value="ABP59367.1"/>
    <property type="molecule type" value="Genomic_DNA"/>
</dbReference>
<dbReference type="RefSeq" id="WP_012016088.1">
    <property type="nucleotide sequence ID" value="NC_009436.1"/>
</dbReference>
<dbReference type="SMR" id="A4W6N7"/>
<dbReference type="STRING" id="399742.Ent638_0680"/>
<dbReference type="KEGG" id="ent:Ent638_0680"/>
<dbReference type="eggNOG" id="COG0414">
    <property type="taxonomic scope" value="Bacteria"/>
</dbReference>
<dbReference type="HOGENOM" id="CLU_047148_0_0_6"/>
<dbReference type="OrthoDB" id="9773087at2"/>
<dbReference type="UniPathway" id="UPA00028">
    <property type="reaction ID" value="UER00005"/>
</dbReference>
<dbReference type="Proteomes" id="UP000000230">
    <property type="component" value="Chromosome"/>
</dbReference>
<dbReference type="GO" id="GO:0005829">
    <property type="term" value="C:cytosol"/>
    <property type="evidence" value="ECO:0007669"/>
    <property type="project" value="TreeGrafter"/>
</dbReference>
<dbReference type="GO" id="GO:0005524">
    <property type="term" value="F:ATP binding"/>
    <property type="evidence" value="ECO:0007669"/>
    <property type="project" value="UniProtKB-KW"/>
</dbReference>
<dbReference type="GO" id="GO:0004592">
    <property type="term" value="F:pantoate-beta-alanine ligase activity"/>
    <property type="evidence" value="ECO:0007669"/>
    <property type="project" value="UniProtKB-UniRule"/>
</dbReference>
<dbReference type="GO" id="GO:0015940">
    <property type="term" value="P:pantothenate biosynthetic process"/>
    <property type="evidence" value="ECO:0007669"/>
    <property type="project" value="UniProtKB-UniRule"/>
</dbReference>
<dbReference type="CDD" id="cd00560">
    <property type="entry name" value="PanC"/>
    <property type="match status" value="1"/>
</dbReference>
<dbReference type="FunFam" id="3.30.1300.10:FF:000001">
    <property type="entry name" value="Pantothenate synthetase"/>
    <property type="match status" value="1"/>
</dbReference>
<dbReference type="FunFam" id="3.40.50.620:FF:000013">
    <property type="entry name" value="Pantothenate synthetase"/>
    <property type="match status" value="1"/>
</dbReference>
<dbReference type="Gene3D" id="3.40.50.620">
    <property type="entry name" value="HUPs"/>
    <property type="match status" value="1"/>
</dbReference>
<dbReference type="Gene3D" id="3.30.1300.10">
    <property type="entry name" value="Pantoate-beta-alanine ligase, C-terminal domain"/>
    <property type="match status" value="1"/>
</dbReference>
<dbReference type="HAMAP" id="MF_00158">
    <property type="entry name" value="PanC"/>
    <property type="match status" value="1"/>
</dbReference>
<dbReference type="InterPro" id="IPR003721">
    <property type="entry name" value="Pantoate_ligase"/>
</dbReference>
<dbReference type="InterPro" id="IPR042176">
    <property type="entry name" value="Pantoate_ligase_C"/>
</dbReference>
<dbReference type="InterPro" id="IPR014729">
    <property type="entry name" value="Rossmann-like_a/b/a_fold"/>
</dbReference>
<dbReference type="NCBIfam" id="TIGR00018">
    <property type="entry name" value="panC"/>
    <property type="match status" value="1"/>
</dbReference>
<dbReference type="PANTHER" id="PTHR21299">
    <property type="entry name" value="CYTIDYLATE KINASE/PANTOATE-BETA-ALANINE LIGASE"/>
    <property type="match status" value="1"/>
</dbReference>
<dbReference type="PANTHER" id="PTHR21299:SF1">
    <property type="entry name" value="PANTOATE--BETA-ALANINE LIGASE"/>
    <property type="match status" value="1"/>
</dbReference>
<dbReference type="Pfam" id="PF02569">
    <property type="entry name" value="Pantoate_ligase"/>
    <property type="match status" value="1"/>
</dbReference>
<dbReference type="SUPFAM" id="SSF52374">
    <property type="entry name" value="Nucleotidylyl transferase"/>
    <property type="match status" value="1"/>
</dbReference>
<gene>
    <name evidence="1" type="primary">panC</name>
    <name type="ordered locus">Ent638_0680</name>
</gene>
<organism>
    <name type="scientific">Enterobacter sp. (strain 638)</name>
    <dbReference type="NCBI Taxonomy" id="399742"/>
    <lineage>
        <taxon>Bacteria</taxon>
        <taxon>Pseudomonadati</taxon>
        <taxon>Pseudomonadota</taxon>
        <taxon>Gammaproteobacteria</taxon>
        <taxon>Enterobacterales</taxon>
        <taxon>Enterobacteriaceae</taxon>
        <taxon>Enterobacter</taxon>
    </lineage>
</organism>
<proteinExistence type="inferred from homology"/>